<accession>P17102</accession>
<keyword id="KW-1074">Activation of host NF-kappa-B by virus</keyword>
<keyword id="KW-0010">Activator</keyword>
<keyword id="KW-0053">Apoptosis</keyword>
<keyword id="KW-1035">Host cytoplasm</keyword>
<keyword id="KW-1079">Host G2/M cell cycle arrest by virus</keyword>
<keyword id="KW-1045">Host mitochondrion</keyword>
<keyword id="KW-1048">Host nucleus</keyword>
<keyword id="KW-0945">Host-virus interaction</keyword>
<keyword id="KW-1121">Modulation of host cell cycle by virus</keyword>
<keyword id="KW-0804">Transcription</keyword>
<keyword id="KW-0805">Transcription regulation</keyword>
<gene>
    <name evidence="1" type="primary">X</name>
</gene>
<evidence type="ECO:0000255" key="1">
    <source>
        <dbReference type="HAMAP-Rule" id="MF_04074"/>
    </source>
</evidence>
<dbReference type="EMBL" id="X51970">
    <property type="protein sequence ID" value="CAA36231.1"/>
    <property type="molecule type" value="Genomic_DNA"/>
</dbReference>
<dbReference type="PIR" id="S10380">
    <property type="entry name" value="QQVLKS"/>
</dbReference>
<dbReference type="SMR" id="P17102"/>
<dbReference type="Proteomes" id="UP000007907">
    <property type="component" value="Segment"/>
</dbReference>
<dbReference type="GO" id="GO:0033650">
    <property type="term" value="C:host cell mitochondrion"/>
    <property type="evidence" value="ECO:0007669"/>
    <property type="project" value="UniProtKB-SubCell"/>
</dbReference>
<dbReference type="GO" id="GO:0042025">
    <property type="term" value="C:host cell nucleus"/>
    <property type="evidence" value="ECO:0007669"/>
    <property type="project" value="UniProtKB-SubCell"/>
</dbReference>
<dbReference type="GO" id="GO:0006351">
    <property type="term" value="P:DNA-templated transcription"/>
    <property type="evidence" value="ECO:0007669"/>
    <property type="project" value="UniProtKB-UniRule"/>
</dbReference>
<dbReference type="GO" id="GO:0085033">
    <property type="term" value="P:symbiont-mediated activation of host NF-kappaB cascade"/>
    <property type="evidence" value="ECO:0007669"/>
    <property type="project" value="UniProtKB-UniRule"/>
</dbReference>
<dbReference type="GO" id="GO:0039592">
    <property type="term" value="P:symbiont-mediated arrest of host cell cycle during G2/M transition"/>
    <property type="evidence" value="ECO:0007669"/>
    <property type="project" value="UniProtKB-UniRule"/>
</dbReference>
<dbReference type="GO" id="GO:0019079">
    <property type="term" value="P:viral genome replication"/>
    <property type="evidence" value="ECO:0007669"/>
    <property type="project" value="UniProtKB-UniRule"/>
</dbReference>
<dbReference type="HAMAP" id="MF_04074">
    <property type="entry name" value="HBV_X"/>
    <property type="match status" value="1"/>
</dbReference>
<dbReference type="InterPro" id="IPR000236">
    <property type="entry name" value="Transactivation_prot_X"/>
</dbReference>
<dbReference type="Pfam" id="PF00739">
    <property type="entry name" value="X"/>
    <property type="match status" value="1"/>
</dbReference>
<reference key="1">
    <citation type="submission" date="1990-02" db="EMBL/GenBank/DDBJ databases">
        <authorList>
            <person name="Koechel H.G."/>
            <person name="Schueler A."/>
            <person name="Lottmann S."/>
            <person name="Thomssen R."/>
        </authorList>
    </citation>
    <scope>NUCLEOTIDE SEQUENCE [GENOMIC DNA]</scope>
</reference>
<reference key="2">
    <citation type="journal article" date="2004" name="J. Virol.">
        <title>The enigmatic X gene of hepatitis B virus.</title>
        <authorList>
            <person name="Bouchard M.J."/>
            <person name="Schneider R.J."/>
        </authorList>
    </citation>
    <scope>REVIEW</scope>
</reference>
<reference key="3">
    <citation type="journal article" date="2006" name="Cancer Sci.">
        <title>Molecular functions and biological roles of hepatitis B virus x protein.</title>
        <authorList>
            <person name="Tang H."/>
            <person name="Oishi N."/>
            <person name="Kaneko S."/>
            <person name="Murakami S."/>
        </authorList>
    </citation>
    <scope>REVIEW</scope>
</reference>
<proteinExistence type="inferred from homology"/>
<organismHost>
    <name type="scientific">Homo sapiens</name>
    <name type="common">Human</name>
    <dbReference type="NCBI Taxonomy" id="9606"/>
</organismHost>
<organismHost>
    <name type="scientific">Pan troglodytes</name>
    <name type="common">Chimpanzee</name>
    <dbReference type="NCBI Taxonomy" id="9598"/>
</organismHost>
<organism>
    <name type="scientific">Hepatitis B virus genotype A2 subtype adw2 (isolate Germany/991/1990)</name>
    <name type="common">HBV-A</name>
    <dbReference type="NCBI Taxonomy" id="10410"/>
    <lineage>
        <taxon>Viruses</taxon>
        <taxon>Riboviria</taxon>
        <taxon>Pararnavirae</taxon>
        <taxon>Artverviricota</taxon>
        <taxon>Revtraviricetes</taxon>
        <taxon>Blubervirales</taxon>
        <taxon>Hepadnaviridae</taxon>
        <taxon>Orthohepadnavirus</taxon>
        <taxon>Hepatitis B virus</taxon>
    </lineage>
</organism>
<name>X_HBVA4</name>
<protein>
    <recommendedName>
        <fullName evidence="1">Protein X</fullName>
    </recommendedName>
    <alternativeName>
        <fullName evidence="1">HBx</fullName>
    </alternativeName>
    <alternativeName>
        <fullName evidence="1">Peptide X</fullName>
    </alternativeName>
    <alternativeName>
        <fullName evidence="1">pX</fullName>
    </alternativeName>
</protein>
<sequence>MATRLCCQLDPSRDVLCLRPVGAESRGRPLSGPLGTLSSPSPSAVPADHGAHLSLRGLPVCAFSSAGPCALRFTSARCMETTVNAHQILPKVLHKRTLGLPAMSTTDLEAYFKDCVFKDWEELGEEIRLKVFVLGGCRHKLVCAPAPCNFFTSA</sequence>
<feature type="chain" id="PRO_0000222363" description="Protein X">
    <location>
        <begin position="1"/>
        <end position="154"/>
    </location>
</feature>
<feature type="region of interest" description="Mitochondrial targeting sequence" evidence="1">
    <location>
        <begin position="68"/>
        <end position="117"/>
    </location>
</feature>
<comment type="function">
    <text evidence="1">Multifunctional protein that plays a role in silencing host antiviral defenses and promoting viral transcription. Does not seem to be essential for HBV infection. May be directly involved in development of cirrhosis and liver cancer (hepatocellular carcinoma). Most of cytosolic activities involve modulation of cytosolic calcium. The effect on apoptosis is controversial depending on the cell types in which the studies have been conducted. May induce apoptosis by localizing in mitochondria and causing loss of mitochondrial membrane potential. May also modulate apoptosis by binding host CFLAR, a key regulator of the death-inducing signaling complex (DISC). Promotes viral transcription by using the host E3 ubiquitin ligase DDB1 to target the SMC5-SMC6 complex to proteasomal degradation. This host complex would otherwise bind to viral episomal DNA, and prevents its transcription. Moderately stimulates transcription of many different viral and cellular transcription elements. Promoters and enhancers stimulated by HBx contain DNA binding sites for NF-kappa-B, AP-1, AP-2, c-EBP, ATF/CREB, or the calcium-activated factor NF-AT.</text>
</comment>
<comment type="subunit">
    <text evidence="1">May form homodimer. May interact with host CEBPA, CFLAR, CREB1, DDB1, E4F1, HBXIP, HSPD1/HSP60, NFKBIA, POLR2E and SMAD4. Interacts with host SMC5-SMC6 complex and induces its degradation. Interacts with host TRPC4AP; leading to prevent ubiquitination of TRPC4AP. Interacts with host PLSCR1; this interaction promotes ubiquitination and degradation of HBx and impairs HBx-mediated cell proliferation.</text>
</comment>
<comment type="subcellular location">
    <subcellularLocation>
        <location evidence="1">Host cytoplasm</location>
    </subcellularLocation>
    <subcellularLocation>
        <location evidence="1">Host nucleus</location>
    </subcellularLocation>
    <subcellularLocation>
        <location evidence="1">Host mitochondrion</location>
    </subcellularLocation>
    <text evidence="1">Mainly cytoplasmic as only a fraction is detected in the nucleus. In cytoplasm, a minor fraction associates with mitochondria or proteasomes.</text>
</comment>
<comment type="PTM">
    <text evidence="1">A fraction may be phosphorylated in insect cells and HepG2 cells, a human hepatoblastoma cell line. Phosphorylated in vitro by host protein kinase C or mitogen-activated protein kinase. N-acetylated in insect cells.</text>
</comment>
<comment type="similarity">
    <text evidence="1">Belongs to the orthohepadnavirus protein X family.</text>
</comment>
<comment type="caution">
    <text>Transcriptional activities should be taken with a grain of salt. As of 2007, all studies demonstrating in vivo interaction between protein X and transcriptional components were performed with significant overexpression of both proteins and in the absence of viral infection.</text>
</comment>